<accession>Q9CN96</accession>
<name>Y539_PASMU</name>
<gene>
    <name type="ordered locus">PM0539</name>
</gene>
<reference key="1">
    <citation type="journal article" date="2001" name="Proc. Natl. Acad. Sci. U.S.A.">
        <title>Complete genomic sequence of Pasteurella multocida Pm70.</title>
        <authorList>
            <person name="May B.J."/>
            <person name="Zhang Q."/>
            <person name="Li L.L."/>
            <person name="Paustian M.L."/>
            <person name="Whittam T.S."/>
            <person name="Kapur V."/>
        </authorList>
    </citation>
    <scope>NUCLEOTIDE SEQUENCE [LARGE SCALE GENOMIC DNA]</scope>
    <source>
        <strain>Pm70</strain>
    </source>
</reference>
<sequence>MKSSIEPDFWKHKTLLEMTDAEWEALCDGCGKCCYRKFIEGHGKRKKLYYTRIACNLLDLETGRCTNYAKRFQLETDCTKLTKKNLPDFHWLPPTCAYRLLNENKPLFDWHPLISGDPHSVKKANILIKQGIHEKDVIDWFEFVVDGH</sequence>
<protein>
    <recommendedName>
        <fullName evidence="1">UPF0260 protein PM0539</fullName>
    </recommendedName>
</protein>
<proteinExistence type="inferred from homology"/>
<comment type="similarity">
    <text evidence="1">Belongs to the UPF0260 family.</text>
</comment>
<comment type="sequence caution" evidence="2">
    <conflict type="erroneous initiation">
        <sequence resource="EMBL-CDS" id="AAK02623"/>
    </conflict>
</comment>
<evidence type="ECO:0000255" key="1">
    <source>
        <dbReference type="HAMAP-Rule" id="MF_00676"/>
    </source>
</evidence>
<evidence type="ECO:0000305" key="2"/>
<keyword id="KW-1185">Reference proteome</keyword>
<organism>
    <name type="scientific">Pasteurella multocida (strain Pm70)</name>
    <dbReference type="NCBI Taxonomy" id="272843"/>
    <lineage>
        <taxon>Bacteria</taxon>
        <taxon>Pseudomonadati</taxon>
        <taxon>Pseudomonadota</taxon>
        <taxon>Gammaproteobacteria</taxon>
        <taxon>Pasteurellales</taxon>
        <taxon>Pasteurellaceae</taxon>
        <taxon>Pasteurella</taxon>
    </lineage>
</organism>
<feature type="chain" id="PRO_0000214583" description="UPF0260 protein PM0539">
    <location>
        <begin position="1"/>
        <end position="148"/>
    </location>
</feature>
<dbReference type="EMBL" id="AE004439">
    <property type="protein sequence ID" value="AAK02623.1"/>
    <property type="status" value="ALT_INIT"/>
    <property type="molecule type" value="Genomic_DNA"/>
</dbReference>
<dbReference type="RefSeq" id="WP_014325974.1">
    <property type="nucleotide sequence ID" value="NC_002663.1"/>
</dbReference>
<dbReference type="STRING" id="272843.PM0539"/>
<dbReference type="EnsemblBacteria" id="AAK02623">
    <property type="protein sequence ID" value="AAK02623"/>
    <property type="gene ID" value="PM0539"/>
</dbReference>
<dbReference type="KEGG" id="pmu:PM0539"/>
<dbReference type="HOGENOM" id="CLU_109769_2_0_6"/>
<dbReference type="OrthoDB" id="9786855at2"/>
<dbReference type="Proteomes" id="UP000000809">
    <property type="component" value="Chromosome"/>
</dbReference>
<dbReference type="HAMAP" id="MF_00676">
    <property type="entry name" value="UPF0260"/>
    <property type="match status" value="1"/>
</dbReference>
<dbReference type="InterPro" id="IPR005358">
    <property type="entry name" value="Puta_zinc/iron-chelating_dom"/>
</dbReference>
<dbReference type="InterPro" id="IPR008228">
    <property type="entry name" value="UCP006173"/>
</dbReference>
<dbReference type="NCBIfam" id="NF003499">
    <property type="entry name" value="PRK05170.1-2"/>
    <property type="match status" value="1"/>
</dbReference>
<dbReference type="NCBIfam" id="NF003501">
    <property type="entry name" value="PRK05170.1-5"/>
    <property type="match status" value="1"/>
</dbReference>
<dbReference type="PANTHER" id="PTHR37421">
    <property type="entry name" value="UPF0260 PROTEIN YCGN"/>
    <property type="match status" value="1"/>
</dbReference>
<dbReference type="PANTHER" id="PTHR37421:SF1">
    <property type="entry name" value="UPF0260 PROTEIN YCGN"/>
    <property type="match status" value="1"/>
</dbReference>
<dbReference type="Pfam" id="PF03692">
    <property type="entry name" value="CxxCxxCC"/>
    <property type="match status" value="1"/>
</dbReference>
<dbReference type="PIRSF" id="PIRSF006173">
    <property type="entry name" value="UCP006173"/>
    <property type="match status" value="1"/>
</dbReference>